<dbReference type="EMBL" id="CP000563">
    <property type="protein sequence ID" value="ABN63634.1"/>
    <property type="molecule type" value="Genomic_DNA"/>
</dbReference>
<dbReference type="RefSeq" id="WP_006083599.1">
    <property type="nucleotide sequence ID" value="NC_009052.1"/>
</dbReference>
<dbReference type="SMR" id="A3DA71"/>
<dbReference type="STRING" id="325240.Sbal_4169"/>
<dbReference type="GeneID" id="67441761"/>
<dbReference type="KEGG" id="sbl:Sbal_4169"/>
<dbReference type="HOGENOM" id="CLU_041575_5_2_6"/>
<dbReference type="OrthoDB" id="9803201at2"/>
<dbReference type="Proteomes" id="UP000001557">
    <property type="component" value="Chromosome"/>
</dbReference>
<dbReference type="GO" id="GO:1990904">
    <property type="term" value="C:ribonucleoprotein complex"/>
    <property type="evidence" value="ECO:0007669"/>
    <property type="project" value="UniProtKB-KW"/>
</dbReference>
<dbReference type="GO" id="GO:0005840">
    <property type="term" value="C:ribosome"/>
    <property type="evidence" value="ECO:0007669"/>
    <property type="project" value="UniProtKB-KW"/>
</dbReference>
<dbReference type="GO" id="GO:0019843">
    <property type="term" value="F:rRNA binding"/>
    <property type="evidence" value="ECO:0007669"/>
    <property type="project" value="UniProtKB-UniRule"/>
</dbReference>
<dbReference type="GO" id="GO:0003735">
    <property type="term" value="F:structural constituent of ribosome"/>
    <property type="evidence" value="ECO:0007669"/>
    <property type="project" value="InterPro"/>
</dbReference>
<dbReference type="GO" id="GO:0006412">
    <property type="term" value="P:translation"/>
    <property type="evidence" value="ECO:0007669"/>
    <property type="project" value="UniProtKB-UniRule"/>
</dbReference>
<dbReference type="FunFam" id="3.40.1370.10:FF:000001">
    <property type="entry name" value="50S ribosomal protein L4"/>
    <property type="match status" value="1"/>
</dbReference>
<dbReference type="Gene3D" id="3.40.1370.10">
    <property type="match status" value="1"/>
</dbReference>
<dbReference type="HAMAP" id="MF_01328_B">
    <property type="entry name" value="Ribosomal_uL4_B"/>
    <property type="match status" value="1"/>
</dbReference>
<dbReference type="InterPro" id="IPR002136">
    <property type="entry name" value="Ribosomal_uL4"/>
</dbReference>
<dbReference type="InterPro" id="IPR013005">
    <property type="entry name" value="Ribosomal_uL4-like"/>
</dbReference>
<dbReference type="InterPro" id="IPR023574">
    <property type="entry name" value="Ribosomal_uL4_dom_sf"/>
</dbReference>
<dbReference type="NCBIfam" id="TIGR03953">
    <property type="entry name" value="rplD_bact"/>
    <property type="match status" value="1"/>
</dbReference>
<dbReference type="PANTHER" id="PTHR10746">
    <property type="entry name" value="50S RIBOSOMAL PROTEIN L4"/>
    <property type="match status" value="1"/>
</dbReference>
<dbReference type="PANTHER" id="PTHR10746:SF6">
    <property type="entry name" value="LARGE RIBOSOMAL SUBUNIT PROTEIN UL4M"/>
    <property type="match status" value="1"/>
</dbReference>
<dbReference type="Pfam" id="PF00573">
    <property type="entry name" value="Ribosomal_L4"/>
    <property type="match status" value="1"/>
</dbReference>
<dbReference type="SUPFAM" id="SSF52166">
    <property type="entry name" value="Ribosomal protein L4"/>
    <property type="match status" value="1"/>
</dbReference>
<gene>
    <name evidence="1" type="primary">rplD</name>
    <name type="ordered locus">Sbal_4169</name>
</gene>
<organism>
    <name type="scientific">Shewanella baltica (strain OS155 / ATCC BAA-1091)</name>
    <dbReference type="NCBI Taxonomy" id="325240"/>
    <lineage>
        <taxon>Bacteria</taxon>
        <taxon>Pseudomonadati</taxon>
        <taxon>Pseudomonadota</taxon>
        <taxon>Gammaproteobacteria</taxon>
        <taxon>Alteromonadales</taxon>
        <taxon>Shewanellaceae</taxon>
        <taxon>Shewanella</taxon>
    </lineage>
</organism>
<name>RL4_SHEB5</name>
<feature type="chain" id="PRO_1000052491" description="Large ribosomal subunit protein uL4">
    <location>
        <begin position="1"/>
        <end position="201"/>
    </location>
</feature>
<feature type="region of interest" description="Disordered" evidence="2">
    <location>
        <begin position="45"/>
        <end position="72"/>
    </location>
</feature>
<evidence type="ECO:0000255" key="1">
    <source>
        <dbReference type="HAMAP-Rule" id="MF_01328"/>
    </source>
</evidence>
<evidence type="ECO:0000256" key="2">
    <source>
        <dbReference type="SAM" id="MobiDB-lite"/>
    </source>
</evidence>
<evidence type="ECO:0000305" key="3"/>
<sequence>MELVLKDAQSALEVSETTFGRDFNEALVHQVVVAYAANARQGTRAQKTRAEVTGSGKKPWRQKGTGRARAGSVKGPIWRGGGVTFAAKTQDHSQKVNKKMYRGALKSILSELVRQERLVVVESFGVEAPKTKELKAKLKAMNLEDVLIVTAEVDENLFLAARNLYKVDVRDVAGLDPVSLIAFNTVLVTADAVKQIEEMLA</sequence>
<proteinExistence type="inferred from homology"/>
<comment type="function">
    <text evidence="1">One of the primary rRNA binding proteins, this protein initially binds near the 5'-end of the 23S rRNA. It is important during the early stages of 50S assembly. It makes multiple contacts with different domains of the 23S rRNA in the assembled 50S subunit and ribosome.</text>
</comment>
<comment type="function">
    <text evidence="1">Forms part of the polypeptide exit tunnel.</text>
</comment>
<comment type="subunit">
    <text evidence="1">Part of the 50S ribosomal subunit.</text>
</comment>
<comment type="similarity">
    <text evidence="1">Belongs to the universal ribosomal protein uL4 family.</text>
</comment>
<keyword id="KW-1185">Reference proteome</keyword>
<keyword id="KW-0687">Ribonucleoprotein</keyword>
<keyword id="KW-0689">Ribosomal protein</keyword>
<keyword id="KW-0694">RNA-binding</keyword>
<keyword id="KW-0699">rRNA-binding</keyword>
<protein>
    <recommendedName>
        <fullName evidence="1">Large ribosomal subunit protein uL4</fullName>
    </recommendedName>
    <alternativeName>
        <fullName evidence="3">50S ribosomal protein L4</fullName>
    </alternativeName>
</protein>
<accession>A3DA71</accession>
<reference key="1">
    <citation type="submission" date="2007-02" db="EMBL/GenBank/DDBJ databases">
        <title>Complete sequence of chromosome of Shewanella baltica OS155.</title>
        <authorList>
            <consortium name="US DOE Joint Genome Institute"/>
            <person name="Copeland A."/>
            <person name="Lucas S."/>
            <person name="Lapidus A."/>
            <person name="Barry K."/>
            <person name="Detter J.C."/>
            <person name="Glavina del Rio T."/>
            <person name="Hammon N."/>
            <person name="Israni S."/>
            <person name="Dalin E."/>
            <person name="Tice H."/>
            <person name="Pitluck S."/>
            <person name="Sims D.R."/>
            <person name="Brettin T."/>
            <person name="Bruce D."/>
            <person name="Han C."/>
            <person name="Tapia R."/>
            <person name="Brainard J."/>
            <person name="Schmutz J."/>
            <person name="Larimer F."/>
            <person name="Land M."/>
            <person name="Hauser L."/>
            <person name="Kyrpides N."/>
            <person name="Mikhailova N."/>
            <person name="Brettar I."/>
            <person name="Klappenbach J."/>
            <person name="Konstantinidis K."/>
            <person name="Rodrigues J."/>
            <person name="Tiedje J."/>
            <person name="Richardson P."/>
        </authorList>
    </citation>
    <scope>NUCLEOTIDE SEQUENCE [LARGE SCALE GENOMIC DNA]</scope>
    <source>
        <strain>OS155 / ATCC BAA-1091</strain>
    </source>
</reference>